<protein>
    <recommendedName>
        <fullName evidence="1">2-succinyl-6-hydroxy-2,4-cyclohexadiene-1-carboxylate synthase</fullName>
        <shortName evidence="1">SHCHC synthase</shortName>
        <ecNumber evidence="1">4.2.99.20</ecNumber>
    </recommendedName>
</protein>
<comment type="function">
    <text evidence="1">Catalyzes a proton abstraction reaction that results in 2,5-elimination of pyruvate from 2-succinyl-5-enolpyruvyl-6-hydroxy-3-cyclohexene-1-carboxylate (SEPHCHC) and the formation of 2-succinyl-6-hydroxy-2,4-cyclohexadiene-1-carboxylate (SHCHC).</text>
</comment>
<comment type="catalytic activity">
    <reaction evidence="1">
        <text>5-enolpyruvoyl-6-hydroxy-2-succinyl-cyclohex-3-ene-1-carboxylate = (1R,6R)-6-hydroxy-2-succinyl-cyclohexa-2,4-diene-1-carboxylate + pyruvate</text>
        <dbReference type="Rhea" id="RHEA:25597"/>
        <dbReference type="ChEBI" id="CHEBI:15361"/>
        <dbReference type="ChEBI" id="CHEBI:58689"/>
        <dbReference type="ChEBI" id="CHEBI:58818"/>
        <dbReference type="EC" id="4.2.99.20"/>
    </reaction>
</comment>
<comment type="pathway">
    <text evidence="1">Quinol/quinone metabolism; 1,4-dihydroxy-2-naphthoate biosynthesis; 1,4-dihydroxy-2-naphthoate from chorismate: step 3/7.</text>
</comment>
<comment type="pathway">
    <text evidence="1">Quinol/quinone metabolism; menaquinone biosynthesis.</text>
</comment>
<comment type="subunit">
    <text evidence="1">Monomer.</text>
</comment>
<comment type="similarity">
    <text evidence="1">Belongs to the AB hydrolase superfamily. MenH family.</text>
</comment>
<sequence length="252" mass="27729">MILHAQAKHGKLGLPWLVFLHGFSGDCHEWQEVGEAFADYSRLYVDLLGHGGSAAISVDGFDDVTDLLRKTLVSYNILDFWLVGYSLGGRVAMMAACQGLAGLCGVIVEGGHPGLQNAEQRAERQRSDRQWAQRFRTEPLTAVFADWYQQPVFASLNDDQRRELVALRSNNNGATLAAMLEATSLAVQPDLRANLSARTFAFYYLCGERDSKFRALAAELAADCHVIPRAGHNAHRENPAGVIASLAQILRF</sequence>
<name>MENH_SHIFL</name>
<gene>
    <name evidence="1" type="primary">menH</name>
    <name type="ordered locus">SF2342</name>
    <name type="ordered locus">S2476</name>
</gene>
<keyword id="KW-0456">Lyase</keyword>
<keyword id="KW-0474">Menaquinone biosynthesis</keyword>
<keyword id="KW-1185">Reference proteome</keyword>
<dbReference type="EC" id="4.2.99.20" evidence="1"/>
<dbReference type="EMBL" id="AE005674">
    <property type="protein sequence ID" value="AAN43856.1"/>
    <property type="molecule type" value="Genomic_DNA"/>
</dbReference>
<dbReference type="EMBL" id="AE014073">
    <property type="protein sequence ID" value="AAP17675.1"/>
    <property type="molecule type" value="Genomic_DNA"/>
</dbReference>
<dbReference type="RefSeq" id="WP_000600480.1">
    <property type="nucleotide sequence ID" value="NZ_WPGW01000032.1"/>
</dbReference>
<dbReference type="SMR" id="Q83QT4"/>
<dbReference type="STRING" id="198214.SF2342"/>
<dbReference type="ESTHER" id="shifl-YFBB">
    <property type="family name" value="MenH_SHCHC"/>
</dbReference>
<dbReference type="PaxDb" id="198214-SF2342"/>
<dbReference type="KEGG" id="sfl:SF2342"/>
<dbReference type="KEGG" id="sfx:S2476"/>
<dbReference type="PATRIC" id="fig|198214.7.peg.2806"/>
<dbReference type="HOGENOM" id="CLU_020336_38_2_6"/>
<dbReference type="UniPathway" id="UPA00079"/>
<dbReference type="UniPathway" id="UPA01057">
    <property type="reaction ID" value="UER00900"/>
</dbReference>
<dbReference type="Proteomes" id="UP000001006">
    <property type="component" value="Chromosome"/>
</dbReference>
<dbReference type="Proteomes" id="UP000002673">
    <property type="component" value="Chromosome"/>
</dbReference>
<dbReference type="GO" id="GO:0070205">
    <property type="term" value="F:2-succinyl-6-hydroxy-2,4-cyclohexadiene-1-carboxylate synthase activity"/>
    <property type="evidence" value="ECO:0007669"/>
    <property type="project" value="UniProtKB-UniRule"/>
</dbReference>
<dbReference type="GO" id="GO:0009234">
    <property type="term" value="P:menaquinone biosynthetic process"/>
    <property type="evidence" value="ECO:0007669"/>
    <property type="project" value="UniProtKB-UniRule"/>
</dbReference>
<dbReference type="FunFam" id="3.40.50.1820:FF:000038">
    <property type="entry name" value="2-succinyl-6-hydroxy-2,4-cyclohexadiene-1-carboxylate synthase"/>
    <property type="match status" value="1"/>
</dbReference>
<dbReference type="Gene3D" id="3.40.50.1820">
    <property type="entry name" value="alpha/beta hydrolase"/>
    <property type="match status" value="1"/>
</dbReference>
<dbReference type="HAMAP" id="MF_01660">
    <property type="entry name" value="MenH"/>
    <property type="match status" value="1"/>
</dbReference>
<dbReference type="InterPro" id="IPR000073">
    <property type="entry name" value="AB_hydrolase_1"/>
</dbReference>
<dbReference type="InterPro" id="IPR029058">
    <property type="entry name" value="AB_hydrolase_fold"/>
</dbReference>
<dbReference type="InterPro" id="IPR022485">
    <property type="entry name" value="SHCHC_synthase_MenH"/>
</dbReference>
<dbReference type="NCBIfam" id="TIGR03695">
    <property type="entry name" value="menH_SHCHC"/>
    <property type="match status" value="1"/>
</dbReference>
<dbReference type="NCBIfam" id="NF008340">
    <property type="entry name" value="PRK11126.1"/>
    <property type="match status" value="1"/>
</dbReference>
<dbReference type="PANTHER" id="PTHR42916">
    <property type="entry name" value="2-SUCCINYL-5-ENOLPYRUVYL-6-HYDROXY-3-CYCLOHEXENE-1-CARBOXYLATE SYNTHASE"/>
    <property type="match status" value="1"/>
</dbReference>
<dbReference type="PANTHER" id="PTHR42916:SF1">
    <property type="entry name" value="PROTEIN PHYLLO, CHLOROPLASTIC"/>
    <property type="match status" value="1"/>
</dbReference>
<dbReference type="Pfam" id="PF12697">
    <property type="entry name" value="Abhydrolase_6"/>
    <property type="match status" value="1"/>
</dbReference>
<dbReference type="SUPFAM" id="SSF53474">
    <property type="entry name" value="alpha/beta-Hydrolases"/>
    <property type="match status" value="1"/>
</dbReference>
<reference key="1">
    <citation type="journal article" date="2002" name="Nucleic Acids Res.">
        <title>Genome sequence of Shigella flexneri 2a: insights into pathogenicity through comparison with genomes of Escherichia coli K12 and O157.</title>
        <authorList>
            <person name="Jin Q."/>
            <person name="Yuan Z."/>
            <person name="Xu J."/>
            <person name="Wang Y."/>
            <person name="Shen Y."/>
            <person name="Lu W."/>
            <person name="Wang J."/>
            <person name="Liu H."/>
            <person name="Yang J."/>
            <person name="Yang F."/>
            <person name="Zhang X."/>
            <person name="Zhang J."/>
            <person name="Yang G."/>
            <person name="Wu H."/>
            <person name="Qu D."/>
            <person name="Dong J."/>
            <person name="Sun L."/>
            <person name="Xue Y."/>
            <person name="Zhao A."/>
            <person name="Gao Y."/>
            <person name="Zhu J."/>
            <person name="Kan B."/>
            <person name="Ding K."/>
            <person name="Chen S."/>
            <person name="Cheng H."/>
            <person name="Yao Z."/>
            <person name="He B."/>
            <person name="Chen R."/>
            <person name="Ma D."/>
            <person name="Qiang B."/>
            <person name="Wen Y."/>
            <person name="Hou Y."/>
            <person name="Yu J."/>
        </authorList>
    </citation>
    <scope>NUCLEOTIDE SEQUENCE [LARGE SCALE GENOMIC DNA]</scope>
    <source>
        <strain>301 / Serotype 2a</strain>
    </source>
</reference>
<reference key="2">
    <citation type="journal article" date="2003" name="Infect. Immun.">
        <title>Complete genome sequence and comparative genomics of Shigella flexneri serotype 2a strain 2457T.</title>
        <authorList>
            <person name="Wei J."/>
            <person name="Goldberg M.B."/>
            <person name="Burland V."/>
            <person name="Venkatesan M.M."/>
            <person name="Deng W."/>
            <person name="Fournier G."/>
            <person name="Mayhew G.F."/>
            <person name="Plunkett G. III"/>
            <person name="Rose D.J."/>
            <person name="Darling A."/>
            <person name="Mau B."/>
            <person name="Perna N.T."/>
            <person name="Payne S.M."/>
            <person name="Runyen-Janecky L.J."/>
            <person name="Zhou S."/>
            <person name="Schwartz D.C."/>
            <person name="Blattner F.R."/>
        </authorList>
    </citation>
    <scope>NUCLEOTIDE SEQUENCE [LARGE SCALE GENOMIC DNA]</scope>
    <source>
        <strain>ATCC 700930 / 2457T / Serotype 2a</strain>
    </source>
</reference>
<evidence type="ECO:0000255" key="1">
    <source>
        <dbReference type="HAMAP-Rule" id="MF_01660"/>
    </source>
</evidence>
<organism>
    <name type="scientific">Shigella flexneri</name>
    <dbReference type="NCBI Taxonomy" id="623"/>
    <lineage>
        <taxon>Bacteria</taxon>
        <taxon>Pseudomonadati</taxon>
        <taxon>Pseudomonadota</taxon>
        <taxon>Gammaproteobacteria</taxon>
        <taxon>Enterobacterales</taxon>
        <taxon>Enterobacteriaceae</taxon>
        <taxon>Shigella</taxon>
    </lineage>
</organism>
<accession>Q83QT4</accession>
<accession>Q7C0Q9</accession>
<feature type="chain" id="PRO_0000341926" description="2-succinyl-6-hydroxy-2,4-cyclohexadiene-1-carboxylate synthase">
    <location>
        <begin position="1"/>
        <end position="252"/>
    </location>
</feature>
<proteinExistence type="inferred from homology"/>